<comment type="function">
    <text evidence="1">Allows the formation of correctly charged Gln-tRNA(Gln) through the transamidation of misacylated Glu-tRNA(Gln) in organisms which lack glutaminyl-tRNA synthetase. The reaction takes place in the presence of glutamine and ATP through an activated gamma-phospho-Glu-tRNA(Gln). The GatDE system is specific for glutamate and does not act on aspartate.</text>
</comment>
<comment type="catalytic activity">
    <reaction evidence="1">
        <text>L-glutamyl-tRNA(Gln) + L-glutamine + ATP + H2O = L-glutaminyl-tRNA(Gln) + L-glutamate + ADP + phosphate + H(+)</text>
        <dbReference type="Rhea" id="RHEA:17521"/>
        <dbReference type="Rhea" id="RHEA-COMP:9681"/>
        <dbReference type="Rhea" id="RHEA-COMP:9684"/>
        <dbReference type="ChEBI" id="CHEBI:15377"/>
        <dbReference type="ChEBI" id="CHEBI:15378"/>
        <dbReference type="ChEBI" id="CHEBI:29985"/>
        <dbReference type="ChEBI" id="CHEBI:30616"/>
        <dbReference type="ChEBI" id="CHEBI:43474"/>
        <dbReference type="ChEBI" id="CHEBI:58359"/>
        <dbReference type="ChEBI" id="CHEBI:78520"/>
        <dbReference type="ChEBI" id="CHEBI:78521"/>
        <dbReference type="ChEBI" id="CHEBI:456216"/>
    </reaction>
</comment>
<comment type="subunit">
    <text evidence="1">Heterodimer of GatD and GatE.</text>
</comment>
<comment type="similarity">
    <text evidence="1">Belongs to the asparaginase 1 family. GatD subfamily.</text>
</comment>
<protein>
    <recommendedName>
        <fullName evidence="1">Glutamyl-tRNA(Gln) amidotransferase subunit D</fullName>
        <shortName evidence="1">Glu-ADT subunit D</shortName>
        <ecNumber evidence="1">6.3.5.-</ecNumber>
    </recommendedName>
</protein>
<name>GATD_THEVO</name>
<dbReference type="EC" id="6.3.5.-" evidence="1"/>
<dbReference type="EMBL" id="BA000011">
    <property type="protein sequence ID" value="BAB60284.1"/>
    <property type="molecule type" value="Genomic_DNA"/>
</dbReference>
<dbReference type="RefSeq" id="WP_010917376.1">
    <property type="nucleotide sequence ID" value="NC_002689.2"/>
</dbReference>
<dbReference type="SMR" id="Q979L8"/>
<dbReference type="STRING" id="273116.gene:9381941"/>
<dbReference type="PaxDb" id="273116-14325380"/>
<dbReference type="GeneID" id="1441258"/>
<dbReference type="KEGG" id="tvo:TVG1168744"/>
<dbReference type="eggNOG" id="arCOG01924">
    <property type="taxonomic scope" value="Archaea"/>
</dbReference>
<dbReference type="HOGENOM" id="CLU_019134_2_1_2"/>
<dbReference type="OrthoDB" id="371959at2157"/>
<dbReference type="PhylomeDB" id="Q979L8"/>
<dbReference type="Proteomes" id="UP000001017">
    <property type="component" value="Chromosome"/>
</dbReference>
<dbReference type="GO" id="GO:0004067">
    <property type="term" value="F:asparaginase activity"/>
    <property type="evidence" value="ECO:0007669"/>
    <property type="project" value="InterPro"/>
</dbReference>
<dbReference type="GO" id="GO:0005524">
    <property type="term" value="F:ATP binding"/>
    <property type="evidence" value="ECO:0007669"/>
    <property type="project" value="UniProtKB-KW"/>
</dbReference>
<dbReference type="GO" id="GO:0050567">
    <property type="term" value="F:glutaminyl-tRNA synthase (glutamine-hydrolyzing) activity"/>
    <property type="evidence" value="ECO:0007669"/>
    <property type="project" value="UniProtKB-UniRule"/>
</dbReference>
<dbReference type="GO" id="GO:0006520">
    <property type="term" value="P:amino acid metabolic process"/>
    <property type="evidence" value="ECO:0007669"/>
    <property type="project" value="InterPro"/>
</dbReference>
<dbReference type="GO" id="GO:0006450">
    <property type="term" value="P:regulation of translational fidelity"/>
    <property type="evidence" value="ECO:0007669"/>
    <property type="project" value="InterPro"/>
</dbReference>
<dbReference type="GO" id="GO:0006412">
    <property type="term" value="P:translation"/>
    <property type="evidence" value="ECO:0007669"/>
    <property type="project" value="UniProtKB-UniRule"/>
</dbReference>
<dbReference type="Gene3D" id="2.30.30.520">
    <property type="match status" value="1"/>
</dbReference>
<dbReference type="Gene3D" id="3.40.50.40">
    <property type="match status" value="1"/>
</dbReference>
<dbReference type="Gene3D" id="3.40.50.1170">
    <property type="entry name" value="L-asparaginase, N-terminal domain"/>
    <property type="match status" value="1"/>
</dbReference>
<dbReference type="HAMAP" id="MF_00586">
    <property type="entry name" value="GatD"/>
    <property type="match status" value="1"/>
</dbReference>
<dbReference type="InterPro" id="IPR006033">
    <property type="entry name" value="AsnA_fam"/>
</dbReference>
<dbReference type="InterPro" id="IPR036152">
    <property type="entry name" value="Asp/glu_Ase-like_sf"/>
</dbReference>
<dbReference type="InterPro" id="IPR006034">
    <property type="entry name" value="Asparaginase/glutaminase-like"/>
</dbReference>
<dbReference type="InterPro" id="IPR020827">
    <property type="entry name" value="Asparaginase/glutaminase_AS1"/>
</dbReference>
<dbReference type="InterPro" id="IPR027475">
    <property type="entry name" value="Asparaginase/glutaminase_AS2"/>
</dbReference>
<dbReference type="InterPro" id="IPR040919">
    <property type="entry name" value="Asparaginase_C"/>
</dbReference>
<dbReference type="InterPro" id="IPR011878">
    <property type="entry name" value="GatD"/>
</dbReference>
<dbReference type="InterPro" id="IPR037222">
    <property type="entry name" value="GatD_N_sf"/>
</dbReference>
<dbReference type="InterPro" id="IPR027473">
    <property type="entry name" value="L-asparaginase_C"/>
</dbReference>
<dbReference type="InterPro" id="IPR027474">
    <property type="entry name" value="L-asparaginase_N"/>
</dbReference>
<dbReference type="InterPro" id="IPR037152">
    <property type="entry name" value="L-asparaginase_N_sf"/>
</dbReference>
<dbReference type="NCBIfam" id="TIGR00519">
    <property type="entry name" value="asnASE_I"/>
    <property type="match status" value="1"/>
</dbReference>
<dbReference type="NCBIfam" id="TIGR02153">
    <property type="entry name" value="gatD_arch"/>
    <property type="match status" value="1"/>
</dbReference>
<dbReference type="NCBIfam" id="NF003217">
    <property type="entry name" value="PRK04183.1"/>
    <property type="match status" value="1"/>
</dbReference>
<dbReference type="PANTHER" id="PTHR11707:SF28">
    <property type="entry name" value="60 KDA LYSOPHOSPHOLIPASE"/>
    <property type="match status" value="1"/>
</dbReference>
<dbReference type="PANTHER" id="PTHR11707">
    <property type="entry name" value="L-ASPARAGINASE"/>
    <property type="match status" value="1"/>
</dbReference>
<dbReference type="Pfam" id="PF00710">
    <property type="entry name" value="Asparaginase"/>
    <property type="match status" value="1"/>
</dbReference>
<dbReference type="Pfam" id="PF17763">
    <property type="entry name" value="Asparaginase_C"/>
    <property type="match status" value="1"/>
</dbReference>
<dbReference type="PIRSF" id="PIRSF500175">
    <property type="entry name" value="Glu_ADT_D"/>
    <property type="match status" value="1"/>
</dbReference>
<dbReference type="PIRSF" id="PIRSF001220">
    <property type="entry name" value="L-ASNase_gatD"/>
    <property type="match status" value="1"/>
</dbReference>
<dbReference type="PRINTS" id="PR00139">
    <property type="entry name" value="ASNGLNASE"/>
</dbReference>
<dbReference type="SMART" id="SM00870">
    <property type="entry name" value="Asparaginase"/>
    <property type="match status" value="1"/>
</dbReference>
<dbReference type="SUPFAM" id="SSF141300">
    <property type="entry name" value="GatD N-terminal domain-like"/>
    <property type="match status" value="1"/>
</dbReference>
<dbReference type="SUPFAM" id="SSF53774">
    <property type="entry name" value="Glutaminase/Asparaginase"/>
    <property type="match status" value="1"/>
</dbReference>
<dbReference type="PROSITE" id="PS00144">
    <property type="entry name" value="ASN_GLN_ASE_1"/>
    <property type="match status" value="1"/>
</dbReference>
<dbReference type="PROSITE" id="PS00917">
    <property type="entry name" value="ASN_GLN_ASE_2"/>
    <property type="match status" value="1"/>
</dbReference>
<dbReference type="PROSITE" id="PS51732">
    <property type="entry name" value="ASN_GLN_ASE_3"/>
    <property type="match status" value="1"/>
</dbReference>
<organism>
    <name type="scientific">Thermoplasma volcanium (strain ATCC 51530 / DSM 4299 / JCM 9571 / NBRC 15438 / GSS1)</name>
    <dbReference type="NCBI Taxonomy" id="273116"/>
    <lineage>
        <taxon>Archaea</taxon>
        <taxon>Methanobacteriati</taxon>
        <taxon>Thermoplasmatota</taxon>
        <taxon>Thermoplasmata</taxon>
        <taxon>Thermoplasmatales</taxon>
        <taxon>Thermoplasmataceae</taxon>
        <taxon>Thermoplasma</taxon>
    </lineage>
</organism>
<feature type="chain" id="PRO_0000140067" description="Glutamyl-tRNA(Gln) amidotransferase subunit D">
    <location>
        <begin position="1"/>
        <end position="406"/>
    </location>
</feature>
<feature type="domain" description="Asparaginase/glutaminase" evidence="2">
    <location>
        <begin position="68"/>
        <end position="390"/>
    </location>
</feature>
<feature type="active site" evidence="1">
    <location>
        <position position="78"/>
    </location>
</feature>
<feature type="active site" evidence="1">
    <location>
        <position position="152"/>
    </location>
</feature>
<feature type="active site" evidence="1">
    <location>
        <position position="153"/>
    </location>
</feature>
<feature type="active site" evidence="1">
    <location>
        <position position="230"/>
    </location>
</feature>
<keyword id="KW-0067">ATP-binding</keyword>
<keyword id="KW-0436">Ligase</keyword>
<keyword id="KW-0547">Nucleotide-binding</keyword>
<keyword id="KW-0648">Protein biosynthesis</keyword>
<accession>Q979L8</accession>
<gene>
    <name evidence="1" type="primary">gatD</name>
    <name type="ordered locus">TV1142</name>
    <name type="ORF">TVG1168744</name>
</gene>
<proteinExistence type="inferred from homology"/>
<sequence>MQNVEIIYKNAKVRGILINEANGLITIKADNGYNLTFDRSEVEILSRVTIEEKKEKKTEVESFGTGEKSISILATGGTIASRVDYETGAVKPVSDPRLLFGGTELESKFNIRVVNVMNQLSENMKPADWIHLARKVMDETKHSSGIVVSHGTDTMSYTSSALAFMFERLAQPIIFVGSQRSSDRPSSDTKENMEGAINFAATDLGEVGIAMHKGISDGSIVLHRAVRSRKMHTSRRDAFESIDTVHLAEYTSSVRFFSDYRKAEEENLLLDHLDEKVSIIYFHPGLVASDVENMIEGKHAVVIMGTGLGHIAKDLIPVFKNFTKDGNFAIMTSQCIYGSVDMNVYSTGRELIAAGVISAGDMVPEVAYVKAMFTLGNYGREEFINVFNRNLRGEILNRLIPREVYI</sequence>
<evidence type="ECO:0000255" key="1">
    <source>
        <dbReference type="HAMAP-Rule" id="MF_00586"/>
    </source>
</evidence>
<evidence type="ECO:0000255" key="2">
    <source>
        <dbReference type="PROSITE-ProRule" id="PRU01068"/>
    </source>
</evidence>
<reference key="1">
    <citation type="journal article" date="2000" name="Proc. Natl. Acad. Sci. U.S.A.">
        <title>Archaeal adaptation to higher temperatures revealed by genomic sequence of Thermoplasma volcanium.</title>
        <authorList>
            <person name="Kawashima T."/>
            <person name="Amano N."/>
            <person name="Koike H."/>
            <person name="Makino S."/>
            <person name="Higuchi S."/>
            <person name="Kawashima-Ohya Y."/>
            <person name="Watanabe K."/>
            <person name="Yamazaki M."/>
            <person name="Kanehori K."/>
            <person name="Kawamoto T."/>
            <person name="Nunoshiba T."/>
            <person name="Yamamoto Y."/>
            <person name="Aramaki H."/>
            <person name="Makino K."/>
            <person name="Suzuki M."/>
        </authorList>
    </citation>
    <scope>NUCLEOTIDE SEQUENCE [LARGE SCALE GENOMIC DNA]</scope>
    <source>
        <strain>ATCC 51530 / DSM 4299 / JCM 9571 / NBRC 15438 / GSS1</strain>
    </source>
</reference>